<protein>
    <recommendedName>
        <fullName evidence="1">UvrABC system protein C</fullName>
        <shortName evidence="1">Protein UvrC</shortName>
    </recommendedName>
    <alternativeName>
        <fullName evidence="1">Excinuclease ABC subunit C</fullName>
    </alternativeName>
</protein>
<accession>B2IMT4</accession>
<keyword id="KW-0963">Cytoplasm</keyword>
<keyword id="KW-0227">DNA damage</keyword>
<keyword id="KW-0228">DNA excision</keyword>
<keyword id="KW-0234">DNA repair</keyword>
<keyword id="KW-0267">Excision nuclease</keyword>
<keyword id="KW-0742">SOS response</keyword>
<name>UVRC_STRPS</name>
<sequence>MNNLIKSKLELLPTSPGCYIHKDKNGTIIYVGKAKNLRNRVRSYFRGSHDTKTEALVSEIVDFEFIVTESNIEALLLEINLIKENKPKYNIMLKDDKSYPFIKITNERYPRLIITRQVKKDGGLYFGPYPDVGAANEIKRLLDRIFPFRKCTNPPSKVCFYYHIGQCMAHTICKKDEIYFKSMAQEVSDFLKGQDNKIIDELKGKMAAAAQTMEFERAAEYRDLIQAIGTLRTKQRVMAKDLQNRDVFGYYVDKGWMCVQVFFVRQGKLIERDVNLFPYFNDPDEDFLTYVGQFYQEKSHLVPNEVLIPQDIDEEAVKALVDSKILKPQRGEKKQLVNLAIKNARVSLEQKFNLLEKSVEKTQGAIENLGRLLQIPTPVRIESFDNSNIMGTSPVSAMVVFVNGKPSKKDYRKYKIKTVVGPDDYASMREVIRRRYGRVQREALTPPDLIVIDGGQGQVNIAKQVIQEELGLDIPIAGLQKNDKHQTHELLFGDPLEVVDLSRNSQEFFLLQRIQDEVHRFAITFHRQLRSKNSFSSQLDGIDGLGPKRKQNLMRHFKSLTKIKEASVDEIVEVGVPRAVAEAVQTKLNPQETEILLQVAEERVDYQTEGNHNKP</sequence>
<feature type="chain" id="PRO_1000099526" description="UvrABC system protein C">
    <location>
        <begin position="1"/>
        <end position="615"/>
    </location>
</feature>
<feature type="domain" description="GIY-YIG" evidence="1">
    <location>
        <begin position="14"/>
        <end position="91"/>
    </location>
</feature>
<feature type="domain" description="UVR" evidence="1">
    <location>
        <begin position="196"/>
        <end position="231"/>
    </location>
</feature>
<comment type="function">
    <text evidence="1">The UvrABC repair system catalyzes the recognition and processing of DNA lesions. UvrC both incises the 5' and 3' sides of the lesion. The N-terminal half is responsible for the 3' incision and the C-terminal half is responsible for the 5' incision.</text>
</comment>
<comment type="subunit">
    <text evidence="1">Interacts with UvrB in an incision complex.</text>
</comment>
<comment type="subcellular location">
    <subcellularLocation>
        <location evidence="1">Cytoplasm</location>
    </subcellularLocation>
</comment>
<comment type="similarity">
    <text evidence="1">Belongs to the UvrC family.</text>
</comment>
<evidence type="ECO:0000255" key="1">
    <source>
        <dbReference type="HAMAP-Rule" id="MF_00203"/>
    </source>
</evidence>
<reference key="1">
    <citation type="journal article" date="2009" name="BMC Genomics">
        <title>Genome evolution driven by host adaptations results in a more virulent and antimicrobial-resistant Streptococcus pneumoniae serotype 14.</title>
        <authorList>
            <person name="Ding F."/>
            <person name="Tang P."/>
            <person name="Hsu M.-H."/>
            <person name="Cui P."/>
            <person name="Hu S."/>
            <person name="Yu J."/>
            <person name="Chiu C.-H."/>
        </authorList>
    </citation>
    <scope>NUCLEOTIDE SEQUENCE [LARGE SCALE GENOMIC DNA]</scope>
    <source>
        <strain>CGSP14</strain>
    </source>
</reference>
<proteinExistence type="inferred from homology"/>
<gene>
    <name evidence="1" type="primary">uvrC</name>
    <name type="ordered locus">SPCG_0578</name>
</gene>
<organism>
    <name type="scientific">Streptococcus pneumoniae (strain CGSP14)</name>
    <dbReference type="NCBI Taxonomy" id="516950"/>
    <lineage>
        <taxon>Bacteria</taxon>
        <taxon>Bacillati</taxon>
        <taxon>Bacillota</taxon>
        <taxon>Bacilli</taxon>
        <taxon>Lactobacillales</taxon>
        <taxon>Streptococcaceae</taxon>
        <taxon>Streptococcus</taxon>
    </lineage>
</organism>
<dbReference type="EMBL" id="CP001033">
    <property type="protein sequence ID" value="ACB89830.1"/>
    <property type="molecule type" value="Genomic_DNA"/>
</dbReference>
<dbReference type="RefSeq" id="WP_001061144.1">
    <property type="nucleotide sequence ID" value="NC_010582.1"/>
</dbReference>
<dbReference type="SMR" id="B2IMT4"/>
<dbReference type="KEGG" id="spw:SPCG_0578"/>
<dbReference type="HOGENOM" id="CLU_014841_3_2_9"/>
<dbReference type="GO" id="GO:0005737">
    <property type="term" value="C:cytoplasm"/>
    <property type="evidence" value="ECO:0007669"/>
    <property type="project" value="UniProtKB-SubCell"/>
</dbReference>
<dbReference type="GO" id="GO:0009380">
    <property type="term" value="C:excinuclease repair complex"/>
    <property type="evidence" value="ECO:0007669"/>
    <property type="project" value="InterPro"/>
</dbReference>
<dbReference type="GO" id="GO:0003677">
    <property type="term" value="F:DNA binding"/>
    <property type="evidence" value="ECO:0007669"/>
    <property type="project" value="UniProtKB-UniRule"/>
</dbReference>
<dbReference type="GO" id="GO:0009381">
    <property type="term" value="F:excinuclease ABC activity"/>
    <property type="evidence" value="ECO:0007669"/>
    <property type="project" value="UniProtKB-UniRule"/>
</dbReference>
<dbReference type="GO" id="GO:0006289">
    <property type="term" value="P:nucleotide-excision repair"/>
    <property type="evidence" value="ECO:0007669"/>
    <property type="project" value="UniProtKB-UniRule"/>
</dbReference>
<dbReference type="GO" id="GO:0009432">
    <property type="term" value="P:SOS response"/>
    <property type="evidence" value="ECO:0007669"/>
    <property type="project" value="UniProtKB-UniRule"/>
</dbReference>
<dbReference type="CDD" id="cd10434">
    <property type="entry name" value="GIY-YIG_UvrC_Cho"/>
    <property type="match status" value="1"/>
</dbReference>
<dbReference type="FunFam" id="1.10.150.20:FF:000005">
    <property type="entry name" value="UvrABC system protein C"/>
    <property type="match status" value="1"/>
</dbReference>
<dbReference type="FunFam" id="3.30.420.340:FF:000002">
    <property type="entry name" value="UvrABC system protein C"/>
    <property type="match status" value="1"/>
</dbReference>
<dbReference type="FunFam" id="3.40.1440.10:FF:000001">
    <property type="entry name" value="UvrABC system protein C"/>
    <property type="match status" value="1"/>
</dbReference>
<dbReference type="FunFam" id="4.10.860.10:FF:000007">
    <property type="entry name" value="UvrABC system protein C"/>
    <property type="match status" value="1"/>
</dbReference>
<dbReference type="Gene3D" id="1.10.150.20">
    <property type="entry name" value="5' to 3' exonuclease, C-terminal subdomain"/>
    <property type="match status" value="1"/>
</dbReference>
<dbReference type="Gene3D" id="3.40.1440.10">
    <property type="entry name" value="GIY-YIG endonuclease"/>
    <property type="match status" value="1"/>
</dbReference>
<dbReference type="Gene3D" id="4.10.860.10">
    <property type="entry name" value="UVR domain"/>
    <property type="match status" value="1"/>
</dbReference>
<dbReference type="Gene3D" id="3.30.420.340">
    <property type="entry name" value="UvrC, RNAse H endonuclease domain"/>
    <property type="match status" value="1"/>
</dbReference>
<dbReference type="HAMAP" id="MF_00203">
    <property type="entry name" value="UvrC"/>
    <property type="match status" value="1"/>
</dbReference>
<dbReference type="InterPro" id="IPR000305">
    <property type="entry name" value="GIY-YIG_endonuc"/>
</dbReference>
<dbReference type="InterPro" id="IPR035901">
    <property type="entry name" value="GIY-YIG_endonuc_sf"/>
</dbReference>
<dbReference type="InterPro" id="IPR047296">
    <property type="entry name" value="GIY-YIG_UvrC_Cho"/>
</dbReference>
<dbReference type="InterPro" id="IPR010994">
    <property type="entry name" value="RuvA_2-like"/>
</dbReference>
<dbReference type="InterPro" id="IPR001943">
    <property type="entry name" value="UVR_dom"/>
</dbReference>
<dbReference type="InterPro" id="IPR036876">
    <property type="entry name" value="UVR_dom_sf"/>
</dbReference>
<dbReference type="InterPro" id="IPR050066">
    <property type="entry name" value="UvrABC_protein_C"/>
</dbReference>
<dbReference type="InterPro" id="IPR004791">
    <property type="entry name" value="UvrC"/>
</dbReference>
<dbReference type="InterPro" id="IPR001162">
    <property type="entry name" value="UvrC_RNase_H_dom"/>
</dbReference>
<dbReference type="InterPro" id="IPR038476">
    <property type="entry name" value="UvrC_RNase_H_dom_sf"/>
</dbReference>
<dbReference type="NCBIfam" id="TIGR00194">
    <property type="entry name" value="uvrC"/>
    <property type="match status" value="1"/>
</dbReference>
<dbReference type="PANTHER" id="PTHR30562:SF1">
    <property type="entry name" value="UVRABC SYSTEM PROTEIN C"/>
    <property type="match status" value="1"/>
</dbReference>
<dbReference type="PANTHER" id="PTHR30562">
    <property type="entry name" value="UVRC/OXIDOREDUCTASE"/>
    <property type="match status" value="1"/>
</dbReference>
<dbReference type="Pfam" id="PF01541">
    <property type="entry name" value="GIY-YIG"/>
    <property type="match status" value="1"/>
</dbReference>
<dbReference type="Pfam" id="PF14520">
    <property type="entry name" value="HHH_5"/>
    <property type="match status" value="1"/>
</dbReference>
<dbReference type="Pfam" id="PF02151">
    <property type="entry name" value="UVR"/>
    <property type="match status" value="1"/>
</dbReference>
<dbReference type="Pfam" id="PF22920">
    <property type="entry name" value="UvrC_RNaseH"/>
    <property type="match status" value="1"/>
</dbReference>
<dbReference type="Pfam" id="PF08459">
    <property type="entry name" value="UvrC_RNaseH_dom"/>
    <property type="match status" value="1"/>
</dbReference>
<dbReference type="SMART" id="SM00465">
    <property type="entry name" value="GIYc"/>
    <property type="match status" value="1"/>
</dbReference>
<dbReference type="SUPFAM" id="SSF46600">
    <property type="entry name" value="C-terminal UvrC-binding domain of UvrB"/>
    <property type="match status" value="1"/>
</dbReference>
<dbReference type="SUPFAM" id="SSF82771">
    <property type="entry name" value="GIY-YIG endonuclease"/>
    <property type="match status" value="1"/>
</dbReference>
<dbReference type="SUPFAM" id="SSF47781">
    <property type="entry name" value="RuvA domain 2-like"/>
    <property type="match status" value="1"/>
</dbReference>
<dbReference type="PROSITE" id="PS50164">
    <property type="entry name" value="GIY_YIG"/>
    <property type="match status" value="1"/>
</dbReference>
<dbReference type="PROSITE" id="PS50151">
    <property type="entry name" value="UVR"/>
    <property type="match status" value="1"/>
</dbReference>
<dbReference type="PROSITE" id="PS50165">
    <property type="entry name" value="UVRC"/>
    <property type="match status" value="1"/>
</dbReference>